<protein>
    <recommendedName>
        <fullName evidence="1">Elongation factor Ts</fullName>
        <shortName evidence="1">EF-Ts</shortName>
    </recommendedName>
</protein>
<keyword id="KW-0963">Cytoplasm</keyword>
<keyword id="KW-0251">Elongation factor</keyword>
<keyword id="KW-0648">Protein biosynthesis</keyword>
<keyword id="KW-1185">Reference proteome</keyword>
<gene>
    <name evidence="1" type="primary">tsf</name>
    <name type="ordered locus">PG_0378</name>
</gene>
<evidence type="ECO:0000255" key="1">
    <source>
        <dbReference type="HAMAP-Rule" id="MF_00050"/>
    </source>
</evidence>
<proteinExistence type="inferred from homology"/>
<dbReference type="EMBL" id="AE015924">
    <property type="protein sequence ID" value="AAQ65585.1"/>
    <property type="molecule type" value="Genomic_DNA"/>
</dbReference>
<dbReference type="RefSeq" id="WP_005873789.1">
    <property type="nucleotide sequence ID" value="NC_002950.2"/>
</dbReference>
<dbReference type="SMR" id="Q7MX40"/>
<dbReference type="STRING" id="242619.PG_0378"/>
<dbReference type="EnsemblBacteria" id="AAQ65585">
    <property type="protein sequence ID" value="AAQ65585"/>
    <property type="gene ID" value="PG_0378"/>
</dbReference>
<dbReference type="GeneID" id="29256762"/>
<dbReference type="KEGG" id="pgi:PG_0378"/>
<dbReference type="eggNOG" id="COG0264">
    <property type="taxonomic scope" value="Bacteria"/>
</dbReference>
<dbReference type="HOGENOM" id="CLU_047155_0_0_10"/>
<dbReference type="Proteomes" id="UP000000588">
    <property type="component" value="Chromosome"/>
</dbReference>
<dbReference type="GO" id="GO:0005737">
    <property type="term" value="C:cytoplasm"/>
    <property type="evidence" value="ECO:0007669"/>
    <property type="project" value="UniProtKB-SubCell"/>
</dbReference>
<dbReference type="GO" id="GO:0003746">
    <property type="term" value="F:translation elongation factor activity"/>
    <property type="evidence" value="ECO:0007669"/>
    <property type="project" value="UniProtKB-UniRule"/>
</dbReference>
<dbReference type="CDD" id="cd14275">
    <property type="entry name" value="UBA_EF-Ts"/>
    <property type="match status" value="1"/>
</dbReference>
<dbReference type="FunFam" id="1.10.8.10:FF:000001">
    <property type="entry name" value="Elongation factor Ts"/>
    <property type="match status" value="1"/>
</dbReference>
<dbReference type="Gene3D" id="1.10.286.20">
    <property type="match status" value="1"/>
</dbReference>
<dbReference type="Gene3D" id="1.10.8.10">
    <property type="entry name" value="DNA helicase RuvA subunit, C-terminal domain"/>
    <property type="match status" value="1"/>
</dbReference>
<dbReference type="Gene3D" id="3.30.479.20">
    <property type="entry name" value="Elongation factor Ts, dimerisation domain"/>
    <property type="match status" value="2"/>
</dbReference>
<dbReference type="HAMAP" id="MF_00050">
    <property type="entry name" value="EF_Ts"/>
    <property type="match status" value="1"/>
</dbReference>
<dbReference type="InterPro" id="IPR036402">
    <property type="entry name" value="EF-Ts_dimer_sf"/>
</dbReference>
<dbReference type="InterPro" id="IPR001816">
    <property type="entry name" value="Transl_elong_EFTs/EF1B"/>
</dbReference>
<dbReference type="InterPro" id="IPR014039">
    <property type="entry name" value="Transl_elong_EFTs/EF1B_dimer"/>
</dbReference>
<dbReference type="InterPro" id="IPR018101">
    <property type="entry name" value="Transl_elong_Ts_CS"/>
</dbReference>
<dbReference type="InterPro" id="IPR009060">
    <property type="entry name" value="UBA-like_sf"/>
</dbReference>
<dbReference type="NCBIfam" id="TIGR00116">
    <property type="entry name" value="tsf"/>
    <property type="match status" value="1"/>
</dbReference>
<dbReference type="PANTHER" id="PTHR11741">
    <property type="entry name" value="ELONGATION FACTOR TS"/>
    <property type="match status" value="1"/>
</dbReference>
<dbReference type="PANTHER" id="PTHR11741:SF0">
    <property type="entry name" value="ELONGATION FACTOR TS, MITOCHONDRIAL"/>
    <property type="match status" value="1"/>
</dbReference>
<dbReference type="Pfam" id="PF00889">
    <property type="entry name" value="EF_TS"/>
    <property type="match status" value="1"/>
</dbReference>
<dbReference type="SUPFAM" id="SSF54713">
    <property type="entry name" value="Elongation factor Ts (EF-Ts), dimerisation domain"/>
    <property type="match status" value="1"/>
</dbReference>
<dbReference type="SUPFAM" id="SSF46934">
    <property type="entry name" value="UBA-like"/>
    <property type="match status" value="1"/>
</dbReference>
<dbReference type="PROSITE" id="PS01126">
    <property type="entry name" value="EF_TS_1"/>
    <property type="match status" value="1"/>
</dbReference>
<dbReference type="PROSITE" id="PS01127">
    <property type="entry name" value="EF_TS_2"/>
    <property type="match status" value="1"/>
</dbReference>
<organism>
    <name type="scientific">Porphyromonas gingivalis (strain ATCC BAA-308 / W83)</name>
    <dbReference type="NCBI Taxonomy" id="242619"/>
    <lineage>
        <taxon>Bacteria</taxon>
        <taxon>Pseudomonadati</taxon>
        <taxon>Bacteroidota</taxon>
        <taxon>Bacteroidia</taxon>
        <taxon>Bacteroidales</taxon>
        <taxon>Porphyromonadaceae</taxon>
        <taxon>Porphyromonas</taxon>
    </lineage>
</organism>
<name>EFTS_PORGI</name>
<sequence>MAVTIQDIAKLRKMSGAGMMDCKNALEESNNDFEKAMEIIRKKGQAVAAKRSDREAAEGCVLSADKDGFAAIVALKCETDFVAKNAEFIELTQNILNTAMDKKPANKEELLALPLADGRTIADHITDRIGVTGEKMELGAYEYISGASSISYIHPGNKLATVAAFNEAIEHQMARDIAMQIAAMNPVAVLPEQVDQHIIDQELQIAREKALEAGKPENLLDRIAQGALQKYYKENTLLQQEFVKDSKLTIEQYLHTGSKTLTVVGFKRFTLNAD</sequence>
<feature type="chain" id="PRO_0000161171" description="Elongation factor Ts">
    <location>
        <begin position="1"/>
        <end position="274"/>
    </location>
</feature>
<feature type="region of interest" description="Involved in Mg(2+) ion dislocation from EF-Tu" evidence="1">
    <location>
        <begin position="79"/>
        <end position="82"/>
    </location>
</feature>
<reference key="1">
    <citation type="journal article" date="2003" name="J. Bacteriol.">
        <title>Complete genome sequence of the oral pathogenic bacterium Porphyromonas gingivalis strain W83.</title>
        <authorList>
            <person name="Nelson K.E."/>
            <person name="Fleischmann R.D."/>
            <person name="DeBoy R.T."/>
            <person name="Paulsen I.T."/>
            <person name="Fouts D.E."/>
            <person name="Eisen J.A."/>
            <person name="Daugherty S.C."/>
            <person name="Dodson R.J."/>
            <person name="Durkin A.S."/>
            <person name="Gwinn M.L."/>
            <person name="Haft D.H."/>
            <person name="Kolonay J.F."/>
            <person name="Nelson W.C."/>
            <person name="Mason T.M."/>
            <person name="Tallon L."/>
            <person name="Gray J."/>
            <person name="Granger D."/>
            <person name="Tettelin H."/>
            <person name="Dong H."/>
            <person name="Galvin J.L."/>
            <person name="Duncan M.J."/>
            <person name="Dewhirst F.E."/>
            <person name="Fraser C.M."/>
        </authorList>
    </citation>
    <scope>NUCLEOTIDE SEQUENCE [LARGE SCALE GENOMIC DNA]</scope>
    <source>
        <strain>ATCC BAA-308 / W83</strain>
    </source>
</reference>
<accession>Q7MX40</accession>
<comment type="function">
    <text evidence="1">Associates with the EF-Tu.GDP complex and induces the exchange of GDP to GTP. It remains bound to the aminoacyl-tRNA.EF-Tu.GTP complex up to the GTP hydrolysis stage on the ribosome.</text>
</comment>
<comment type="subcellular location">
    <subcellularLocation>
        <location evidence="1">Cytoplasm</location>
    </subcellularLocation>
</comment>
<comment type="similarity">
    <text evidence="1">Belongs to the EF-Ts family.</text>
</comment>